<sequence length="1131" mass="122532">MPTPVAAARQCLSPAAVPALDAAVASSRRRAHAQTTSLHLISSLLAPPAPPLLRDALARARSAAYSPRVQLKALDLCFAVSLDRLPSVSASSSSSGAADEPPVSNSLMAAIKRSQANQRRNPDTFHFYHQAATAQTPAAVKVELSHLVLAILDDPVVSRVFAEAGFRSGDIKLAILRPAPPMPLLGRLPTRTRPPPLFLCSFAAADDADVPSPAGNLAGAGEENCRRIAEILSRGRNPMLVGVGAASAADDFAAASPYRIIHVDPNTIDRSDLGVAAAMASATSGLIISIGDLKQLVPDEDAEAQEKGRRVVAEVTRVLETHSKVGRVWVMGWSATYETYLAFLSKFPLVDKDWDLQLLPITAVHAAATAGPAAAAAGLMPPATTVAAFSKPAASLMDSFVPFGGFLCDNYEENSLTANSCPQALRCQQCNDKYEQEVATIISASGITAEDHHQGGLPSLLQNGSMMGPNNGFDPVKARDDRMVLNSKILNLRKKWNEYCLRLHQDHQRINRDPYKPFPRYIGVPTDKERSANSSKGSESVGVQKDVIKPCAVSAVHSSSTARPISSPSVTNKRNEDLVLNLQARHSKSDENLQERGMQSQHGTLSNVDNPDDHVSPSSAAPVETDLVLGTPRECSSKGSSSTCSKRVEDSERSVHLVPKKVDDLNLKHPQLSVQPNSCSWSSINVGKTSHSTLHSVASGGFSAFGQWQKRSPLAAQNSDLSNYKLLVERLFKVVGRQEEALSAICESIVRCRSTESRRGPNRNDIWLCFHGSDSMAKKRIAVALAELMHGSKDNLIYLDLNLQDWDDSSFRGKTGIDCIVEQLSKKRQSVLFLDNIDRADCLVQDSLSDAIKSGRFQDMRGKVVDINDSIVVLSRSMIQGSKNGLEEGLSFSEEKILATRGHRLKILVEPGRAITSGCPSGKVVVSPRHFLTKIQASLCSGSISKRKLSISDDQEKLQESPSSSKRLHRTSSVPFDLNLPVDEDEPLDADDDSSSHENSYGNTEKSIDALLHSVDGSINFKPFDFDKLADDMLQEFSNILRKNLGSECMLEIDVGAMEQILAAAWKSEEDRKPVPTWLEQVFARSLDELKLKRKHVSSSTLRLVACEDTVPAVKGDGLGVLLPPRIILDC</sequence>
<accession>Q2RBP2</accession>
<accession>B9G8Z0</accession>
<accession>Q0IV93</accession>
<proteinExistence type="evidence at protein level"/>
<name>D53_ORYSJ</name>
<keyword id="KW-0002">3D-structure</keyword>
<keyword id="KW-0539">Nucleus</keyword>
<keyword id="KW-1185">Reference proteome</keyword>
<keyword id="KW-0677">Repeat</keyword>
<keyword id="KW-0832">Ubl conjugation</keyword>
<feature type="chain" id="PRO_0000435718" description="Protein DWARF 53">
    <location>
        <begin position="1"/>
        <end position="1131"/>
    </location>
</feature>
<feature type="domain" description="Clp R" evidence="1">
    <location>
        <begin position="8"/>
        <end position="181"/>
    </location>
</feature>
<feature type="region of interest" description="Repeat 1" evidence="1">
    <location>
        <begin position="12"/>
        <end position="85"/>
    </location>
</feature>
<feature type="region of interest" description="Repeat 2" evidence="1">
    <location>
        <begin position="103"/>
        <end position="181"/>
    </location>
</feature>
<feature type="region of interest" description="Disordered" evidence="2">
    <location>
        <begin position="511"/>
        <end position="574"/>
    </location>
</feature>
<feature type="region of interest" description="Disordered" evidence="2">
    <location>
        <begin position="588"/>
        <end position="655"/>
    </location>
</feature>
<feature type="region of interest" description="Disordered" evidence="2">
    <location>
        <begin position="951"/>
        <end position="970"/>
    </location>
</feature>
<feature type="region of interest" description="Disordered" evidence="2">
    <location>
        <begin position="976"/>
        <end position="1002"/>
    </location>
</feature>
<feature type="short sequence motif" description="EAR 1" evidence="9 10">
    <location>
        <begin position="578"/>
        <end position="582"/>
    </location>
</feature>
<feature type="short sequence motif" description="EAR 2" evidence="9 10">
    <location>
        <begin position="799"/>
        <end position="803"/>
    </location>
</feature>
<feature type="short sequence motif" description="EAR 3" evidence="9 10">
    <location>
        <begin position="976"/>
        <end position="981"/>
    </location>
</feature>
<feature type="compositionally biased region" description="Low complexity" evidence="2">
    <location>
        <begin position="558"/>
        <end position="569"/>
    </location>
</feature>
<feature type="compositionally biased region" description="Polar residues" evidence="2">
    <location>
        <begin position="597"/>
        <end position="609"/>
    </location>
</feature>
<feature type="compositionally biased region" description="Basic and acidic residues" evidence="2">
    <location>
        <begin position="646"/>
        <end position="655"/>
    </location>
</feature>
<feature type="compositionally biased region" description="Acidic residues" evidence="2">
    <location>
        <begin position="982"/>
        <end position="993"/>
    </location>
</feature>
<feature type="mutagenesis site" description="In d53; dwarf plants with increased tiller numbers. No effect on the interaction with D14." evidence="3 4">
    <original>RGKTGI</original>
    <variation>T</variation>
    <location>
        <begin position="812"/>
        <end position="817"/>
    </location>
</feature>
<comment type="function">
    <text evidence="3 4 6">Repressor of strigolactones (SL) signaling (PubMed:24336200, PubMed:24336215). Subjected to a negative feedback control of SL signaling (PubMed:24336200, PubMed:24336215). Suppresses the transcriptional activation activity of SPL14/IPA1 in SL signaling (PubMed:28809396). Acts with SPL14/IPA1 to mediate the SL-regulated tiller development (PubMed:28809396). Subject to a negative feedback regulation by SPL14/IPA1, which binds to D53 promoter to repress D53 gene expression (PubMed:28809396).</text>
</comment>
<comment type="subunit">
    <text evidence="3 4 5 6">Interacts with D3 (PubMed:24336200). Interacts with D14 (PubMed:24336200, PubMed:25713176). The interaction with D14 is enhanced in the presence of strigolactones (PubMed:24336200). The interaction with D14 occurs in the presence of (2'R) stereoisomers of strigolactones, but not (2'S) stereoisomers (PubMed:25713176). Interacts with the TOPLESS-related proteins TPR1, TPR2 and TPR3 (PubMed:24336200). Interacts with SPL14/IPA1 (PubMed:28809396).</text>
</comment>
<comment type="subcellular location">
    <subcellularLocation>
        <location evidence="3 4">Nucleus</location>
    </subcellularLocation>
</comment>
<comment type="tissue specificity">
    <text evidence="3 4">Expressed in the shoot bases of seedlings, young leaves, axillary buds and young panicles (PubMed:24336200, PubMed:24336215). Expressed in young roots vasculature, culms, internodes and nodes, preferentially in the parenchyma cells surrounding the xylem (PubMed:24336215).</text>
</comment>
<comment type="induction">
    <text evidence="3 4">Up-regulated by strigolactone treatment.</text>
</comment>
<comment type="domain">
    <text evidence="4 9">Contains 3 EAR motifs associated with active repression of several target genes (PubMed:24336200, PubMed:24336215). The D1 domain (195-440) is essential for the strigolactone-dependent D53-D14 interaction (PubMed:24336215).</text>
</comment>
<comment type="PTM">
    <text evidence="3">Polyubiquitinated. Strigolactone, but not karrikin, triggers rapid SCF(D3)-dependent degradation via the proteasome.</text>
</comment>
<comment type="similarity">
    <text evidence="8">Belongs to the ClpA/ClpB family.</text>
</comment>
<comment type="sequence caution" evidence="8">
    <conflict type="erroneous gene model prediction">
        <sequence resource="EMBL-CDS" id="BAF27372"/>
    </conflict>
</comment>
<comment type="sequence caution" evidence="8">
    <conflict type="erroneous gene model prediction">
        <sequence resource="EMBL-CDS" id="BAT12295"/>
    </conflict>
</comment>
<comment type="sequence caution" evidence="8">
    <conflict type="erroneous gene model prediction">
        <sequence resource="EMBL-CDS" id="EEE51496"/>
    </conflict>
</comment>
<evidence type="ECO:0000255" key="1">
    <source>
        <dbReference type="PROSITE-ProRule" id="PRU01251"/>
    </source>
</evidence>
<evidence type="ECO:0000256" key="2">
    <source>
        <dbReference type="SAM" id="MobiDB-lite"/>
    </source>
</evidence>
<evidence type="ECO:0000269" key="3">
    <source>
    </source>
</evidence>
<evidence type="ECO:0000269" key="4">
    <source>
    </source>
</evidence>
<evidence type="ECO:0000269" key="5">
    <source>
    </source>
</evidence>
<evidence type="ECO:0000269" key="6">
    <source>
    </source>
</evidence>
<evidence type="ECO:0000303" key="7">
    <source>
    </source>
</evidence>
<evidence type="ECO:0000305" key="8"/>
<evidence type="ECO:0000305" key="9">
    <source>
    </source>
</evidence>
<evidence type="ECO:0000305" key="10">
    <source>
    </source>
</evidence>
<evidence type="ECO:0000312" key="11">
    <source>
        <dbReference type="EMBL" id="ABA91056.1"/>
    </source>
</evidence>
<evidence type="ECO:0000312" key="12">
    <source>
        <dbReference type="EMBL" id="BAF27372.2"/>
    </source>
</evidence>
<evidence type="ECO:0000312" key="13">
    <source>
        <dbReference type="EMBL" id="EEE51496.1"/>
    </source>
</evidence>
<protein>
    <recommendedName>
        <fullName evidence="7">Protein DWARF 53</fullName>
    </recommendedName>
</protein>
<gene>
    <name evidence="7" type="primary">D53</name>
    <name evidence="12" type="ordered locus">Os11g0104300</name>
    <name evidence="11" type="ordered locus">LOC_Os11g01330</name>
    <name evidence="13" type="ORF">OsJ_32651</name>
</gene>
<dbReference type="EMBL" id="KF623088">
    <property type="protein sequence ID" value="AHC72433.1"/>
    <property type="molecule type" value="Genomic_DNA"/>
</dbReference>
<dbReference type="EMBL" id="KF709434">
    <property type="protein sequence ID" value="AHC31003.1"/>
    <property type="molecule type" value="mRNA"/>
</dbReference>
<dbReference type="EMBL" id="DP000010">
    <property type="protein sequence ID" value="ABA91056.1"/>
    <property type="molecule type" value="Genomic_DNA"/>
</dbReference>
<dbReference type="EMBL" id="AP008217">
    <property type="protein sequence ID" value="BAF27372.2"/>
    <property type="status" value="ALT_SEQ"/>
    <property type="molecule type" value="Genomic_DNA"/>
</dbReference>
<dbReference type="EMBL" id="AP014967">
    <property type="protein sequence ID" value="BAT12295.1"/>
    <property type="status" value="ALT_SEQ"/>
    <property type="molecule type" value="Genomic_DNA"/>
</dbReference>
<dbReference type="EMBL" id="CM000148">
    <property type="protein sequence ID" value="EEE51496.1"/>
    <property type="status" value="ALT_SEQ"/>
    <property type="molecule type" value="Genomic_DNA"/>
</dbReference>
<dbReference type="RefSeq" id="XP_015617462.1">
    <property type="nucleotide sequence ID" value="XM_015761976.1"/>
</dbReference>
<dbReference type="PDB" id="5J9K">
    <property type="method" value="X-ray"/>
    <property type="resolution" value="2.55 A"/>
    <property type="chains" value="C/D=794-808"/>
</dbReference>
<dbReference type="PDB" id="5JA5">
    <property type="method" value="X-ray"/>
    <property type="resolution" value="2.00 A"/>
    <property type="chains" value="B=794-808"/>
</dbReference>
<dbReference type="PDB" id="5JHP">
    <property type="method" value="X-ray"/>
    <property type="resolution" value="3.15 A"/>
    <property type="chains" value="E=794-808"/>
</dbReference>
<dbReference type="PDBsum" id="5J9K"/>
<dbReference type="PDBsum" id="5JA5"/>
<dbReference type="PDBsum" id="5JHP"/>
<dbReference type="SMR" id="Q2RBP2"/>
<dbReference type="FunCoup" id="Q2RBP2">
    <property type="interactions" value="1861"/>
</dbReference>
<dbReference type="STRING" id="39947.Q2RBP2"/>
<dbReference type="PaxDb" id="39947-Q2RBP2"/>
<dbReference type="EnsemblPlants" id="Os11t0104300-01">
    <property type="protein sequence ID" value="Os11t0104300-01"/>
    <property type="gene ID" value="Os11g0104300"/>
</dbReference>
<dbReference type="Gramene" id="Os11t0104300-01">
    <property type="protein sequence ID" value="Os11t0104300-01"/>
    <property type="gene ID" value="Os11g0104300"/>
</dbReference>
<dbReference type="KEGG" id="dosa:Os11g0104300"/>
<dbReference type="InParanoid" id="Q2RBP2"/>
<dbReference type="OrthoDB" id="1723324at2759"/>
<dbReference type="PlantReactome" id="R-OSA-5654828">
    <property type="pathway name" value="Strigolactone signaling"/>
</dbReference>
<dbReference type="Proteomes" id="UP000000763">
    <property type="component" value="Chromosome 11"/>
</dbReference>
<dbReference type="Proteomes" id="UP000007752">
    <property type="component" value="Chromosome 11"/>
</dbReference>
<dbReference type="Proteomes" id="UP000059680">
    <property type="component" value="Chromosome 11"/>
</dbReference>
<dbReference type="GO" id="GO:0005634">
    <property type="term" value="C:nucleus"/>
    <property type="evidence" value="ECO:0000314"/>
    <property type="project" value="UniProtKB"/>
</dbReference>
<dbReference type="GO" id="GO:1902347">
    <property type="term" value="P:response to strigolactone"/>
    <property type="evidence" value="ECO:0000314"/>
    <property type="project" value="UniProtKB"/>
</dbReference>
<dbReference type="CDD" id="cd19499">
    <property type="entry name" value="RecA-like_ClpB_Hsp104-like"/>
    <property type="match status" value="1"/>
</dbReference>
<dbReference type="Gene3D" id="1.10.1780.10">
    <property type="entry name" value="Clp, N-terminal domain"/>
    <property type="match status" value="1"/>
</dbReference>
<dbReference type="Gene3D" id="3.40.50.300">
    <property type="entry name" value="P-loop containing nucleotide triphosphate hydrolases"/>
    <property type="match status" value="1"/>
</dbReference>
<dbReference type="InterPro" id="IPR036628">
    <property type="entry name" value="Clp_N_dom_sf"/>
</dbReference>
<dbReference type="InterPro" id="IPR004176">
    <property type="entry name" value="Clp_R_dom"/>
</dbReference>
<dbReference type="InterPro" id="IPR027417">
    <property type="entry name" value="P-loop_NTPase"/>
</dbReference>
<dbReference type="InterPro" id="IPR051650">
    <property type="entry name" value="SL_signaling_regulator"/>
</dbReference>
<dbReference type="PANTHER" id="PTHR43572">
    <property type="entry name" value="CHAPERONE PROTEIN CLPD, CHLOROPLASTIC"/>
    <property type="match status" value="1"/>
</dbReference>
<dbReference type="PANTHER" id="PTHR43572:SF38">
    <property type="entry name" value="PROTEIN SMAX1-LIKE 6"/>
    <property type="match status" value="1"/>
</dbReference>
<dbReference type="SUPFAM" id="SSF52540">
    <property type="entry name" value="P-loop containing nucleoside triphosphate hydrolases"/>
    <property type="match status" value="1"/>
</dbReference>
<dbReference type="PROSITE" id="PS51903">
    <property type="entry name" value="CLP_R"/>
    <property type="match status" value="1"/>
</dbReference>
<reference key="1">
    <citation type="journal article" date="2013" name="Nature">
        <title>DWARF 53 acts as a repressor of strigolactone signalling in rice.</title>
        <authorList>
            <person name="Jiang L."/>
            <person name="Liu X."/>
            <person name="Xiong G."/>
            <person name="Liu H."/>
            <person name="Chen F."/>
            <person name="Wang L."/>
            <person name="Meng X."/>
            <person name="Liu G."/>
            <person name="Yu H."/>
            <person name="Yuan Y."/>
            <person name="Yi W."/>
            <person name="Zhao L."/>
            <person name="Ma H."/>
            <person name="He Y."/>
            <person name="Wu Z."/>
            <person name="Melcher K."/>
            <person name="Qian Q."/>
            <person name="Xu H.E."/>
            <person name="Wang Y."/>
            <person name="Li J."/>
        </authorList>
    </citation>
    <scope>NUCLEOTIDE SEQUENCE [GENOMIC DNA]</scope>
    <scope>FUNCTION</scope>
    <scope>MUTAGENESIS OF 812-ARG--ILE-817</scope>
    <scope>TISSUE SPECIFICITY</scope>
    <scope>SUBCELLULAR LOCATION</scope>
    <scope>INDUCTION BY STRIGOLACTONE</scope>
    <scope>UBIQUITINATION</scope>
    <scope>EAR MOTIF</scope>
    <scope>INTERACTION WITH D14; D3; TPR1; TPR2 AND TPR3</scope>
    <scope>GENE FAMILY</scope>
</reference>
<reference key="2">
    <citation type="journal article" date="2013" name="Nature">
        <title>D14-SCF(D3)-dependent degradation of D53 regulates strigolactone signalling.</title>
        <authorList>
            <person name="Zhou F."/>
            <person name="Lin Q."/>
            <person name="Zhu L."/>
            <person name="Ren Y."/>
            <person name="Zhou K."/>
            <person name="Shabek N."/>
            <person name="Wu F."/>
            <person name="Mao H."/>
            <person name="Dong W."/>
            <person name="Gan L."/>
            <person name="Ma W."/>
            <person name="Gao H."/>
            <person name="Chen J."/>
            <person name="Yang C."/>
            <person name="Wang D."/>
            <person name="Tan J."/>
            <person name="Zhang X."/>
            <person name="Guo X."/>
            <person name="Wang J."/>
            <person name="Jiang L."/>
            <person name="Liu X."/>
            <person name="Chen W."/>
            <person name="Chu J."/>
            <person name="Yan C."/>
            <person name="Ueno K."/>
            <person name="Ito S."/>
            <person name="Asami T."/>
            <person name="Cheng Z."/>
            <person name="Wang J."/>
            <person name="Lei C."/>
            <person name="Zhai H."/>
            <person name="Wu C."/>
            <person name="Wang H."/>
            <person name="Zheng N."/>
            <person name="Wan J."/>
        </authorList>
    </citation>
    <scope>NUCLEOTIDE SEQUENCE [MRNA]</scope>
    <scope>FUNCTION</scope>
    <scope>MUTAGENESIS OF 812-ARG--ILE-817</scope>
    <scope>EAR MOTIF</scope>
    <scope>TISSUE SPECIFICITY</scope>
    <scope>INDUCTION BY STRIGOLACTONE</scope>
    <scope>SUBCELLULAR LOCATION</scope>
    <scope>INTERACTION WITH D14</scope>
    <scope>DOMAIN</scope>
</reference>
<reference key="3">
    <citation type="journal article" date="2005" name="BMC Biol.">
        <title>The sequence of rice chromosomes 11 and 12, rich in disease resistance genes and recent gene duplications.</title>
        <authorList>
            <consortium name="The rice chromosomes 11 and 12 sequencing consortia"/>
        </authorList>
    </citation>
    <scope>NUCLEOTIDE SEQUENCE [LARGE SCALE GENOMIC DNA]</scope>
    <source>
        <strain>cv. Nipponbare</strain>
    </source>
</reference>
<reference key="4">
    <citation type="journal article" date="2005" name="Nature">
        <title>The map-based sequence of the rice genome.</title>
        <authorList>
            <consortium name="International rice genome sequencing project (IRGSP)"/>
        </authorList>
    </citation>
    <scope>NUCLEOTIDE SEQUENCE [LARGE SCALE GENOMIC DNA]</scope>
    <source>
        <strain>cv. Nipponbare</strain>
    </source>
</reference>
<reference key="5">
    <citation type="journal article" date="2008" name="Nucleic Acids Res.">
        <title>The rice annotation project database (RAP-DB): 2008 update.</title>
        <authorList>
            <consortium name="The rice annotation project (RAP)"/>
        </authorList>
    </citation>
    <scope>GENOME REANNOTATION</scope>
    <source>
        <strain>cv. Nipponbare</strain>
    </source>
</reference>
<reference key="6">
    <citation type="journal article" date="2013" name="Rice">
        <title>Improvement of the Oryza sativa Nipponbare reference genome using next generation sequence and optical map data.</title>
        <authorList>
            <person name="Kawahara Y."/>
            <person name="de la Bastide M."/>
            <person name="Hamilton J.P."/>
            <person name="Kanamori H."/>
            <person name="McCombie W.R."/>
            <person name="Ouyang S."/>
            <person name="Schwartz D.C."/>
            <person name="Tanaka T."/>
            <person name="Wu J."/>
            <person name="Zhou S."/>
            <person name="Childs K.L."/>
            <person name="Davidson R.M."/>
            <person name="Lin H."/>
            <person name="Quesada-Ocampo L."/>
            <person name="Vaillancourt B."/>
            <person name="Sakai H."/>
            <person name="Lee S.S."/>
            <person name="Kim J."/>
            <person name="Numa H."/>
            <person name="Itoh T."/>
            <person name="Buell C.R."/>
            <person name="Matsumoto T."/>
        </authorList>
    </citation>
    <scope>GENOME REANNOTATION</scope>
    <source>
        <strain>cv. Nipponbare</strain>
    </source>
</reference>
<reference key="7">
    <citation type="journal article" date="2005" name="PLoS Biol.">
        <title>The genomes of Oryza sativa: a history of duplications.</title>
        <authorList>
            <person name="Yu J."/>
            <person name="Wang J."/>
            <person name="Lin W."/>
            <person name="Li S."/>
            <person name="Li H."/>
            <person name="Zhou J."/>
            <person name="Ni P."/>
            <person name="Dong W."/>
            <person name="Hu S."/>
            <person name="Zeng C."/>
            <person name="Zhang J."/>
            <person name="Zhang Y."/>
            <person name="Li R."/>
            <person name="Xu Z."/>
            <person name="Li S."/>
            <person name="Li X."/>
            <person name="Zheng H."/>
            <person name="Cong L."/>
            <person name="Lin L."/>
            <person name="Yin J."/>
            <person name="Geng J."/>
            <person name="Li G."/>
            <person name="Shi J."/>
            <person name="Liu J."/>
            <person name="Lv H."/>
            <person name="Li J."/>
            <person name="Wang J."/>
            <person name="Deng Y."/>
            <person name="Ran L."/>
            <person name="Shi X."/>
            <person name="Wang X."/>
            <person name="Wu Q."/>
            <person name="Li C."/>
            <person name="Ren X."/>
            <person name="Wang J."/>
            <person name="Wang X."/>
            <person name="Li D."/>
            <person name="Liu D."/>
            <person name="Zhang X."/>
            <person name="Ji Z."/>
            <person name="Zhao W."/>
            <person name="Sun Y."/>
            <person name="Zhang Z."/>
            <person name="Bao J."/>
            <person name="Han Y."/>
            <person name="Dong L."/>
            <person name="Ji J."/>
            <person name="Chen P."/>
            <person name="Wu S."/>
            <person name="Liu J."/>
            <person name="Xiao Y."/>
            <person name="Bu D."/>
            <person name="Tan J."/>
            <person name="Yang L."/>
            <person name="Ye C."/>
            <person name="Zhang J."/>
            <person name="Xu J."/>
            <person name="Zhou Y."/>
            <person name="Yu Y."/>
            <person name="Zhang B."/>
            <person name="Zhuang S."/>
            <person name="Wei H."/>
            <person name="Liu B."/>
            <person name="Lei M."/>
            <person name="Yu H."/>
            <person name="Li Y."/>
            <person name="Xu H."/>
            <person name="Wei S."/>
            <person name="He X."/>
            <person name="Fang L."/>
            <person name="Zhang Z."/>
            <person name="Zhang Y."/>
            <person name="Huang X."/>
            <person name="Su Z."/>
            <person name="Tong W."/>
            <person name="Li J."/>
            <person name="Tong Z."/>
            <person name="Li S."/>
            <person name="Ye J."/>
            <person name="Wang L."/>
            <person name="Fang L."/>
            <person name="Lei T."/>
            <person name="Chen C.-S."/>
            <person name="Chen H.-C."/>
            <person name="Xu Z."/>
            <person name="Li H."/>
            <person name="Huang H."/>
            <person name="Zhang F."/>
            <person name="Xu H."/>
            <person name="Li N."/>
            <person name="Zhao C."/>
            <person name="Li S."/>
            <person name="Dong L."/>
            <person name="Huang Y."/>
            <person name="Li L."/>
            <person name="Xi Y."/>
            <person name="Qi Q."/>
            <person name="Li W."/>
            <person name="Zhang B."/>
            <person name="Hu W."/>
            <person name="Zhang Y."/>
            <person name="Tian X."/>
            <person name="Jiao Y."/>
            <person name="Liang X."/>
            <person name="Jin J."/>
            <person name="Gao L."/>
            <person name="Zheng W."/>
            <person name="Hao B."/>
            <person name="Liu S.-M."/>
            <person name="Wang W."/>
            <person name="Yuan L."/>
            <person name="Cao M."/>
            <person name="McDermott J."/>
            <person name="Samudrala R."/>
            <person name="Wang J."/>
            <person name="Wong G.K.-S."/>
            <person name="Yang H."/>
        </authorList>
    </citation>
    <scope>NUCLEOTIDE SEQUENCE [LARGE SCALE GENOMIC DNA]</scope>
    <source>
        <strain>cv. Nipponbare</strain>
    </source>
</reference>
<reference key="8">
    <citation type="journal article" date="2014" name="Curr. Opin. Plant Biol.">
        <title>Strigolactone signalling: standing on the shoulders of DWARFs.</title>
        <authorList>
            <person name="Bennett T."/>
            <person name="Leyser O."/>
        </authorList>
    </citation>
    <scope>REVIEW</scope>
</reference>
<reference key="9">
    <citation type="journal article" date="2015" name="Plant Cell Physiol.">
        <title>Structural requirements of strigolactones for shoot branching inhibition in rice and Arabidopsis.</title>
        <authorList>
            <person name="Umehara M."/>
            <person name="Cao M."/>
            <person name="Akiyama K."/>
            <person name="Akatsu T."/>
            <person name="Seto Y."/>
            <person name="Hanada A."/>
            <person name="Li W."/>
            <person name="Takeda-Kamiya N."/>
            <person name="Morimoto Y."/>
            <person name="Yamaguchi S."/>
        </authorList>
    </citation>
    <scope>INTERACTION WITH D14</scope>
</reference>
<reference key="10">
    <citation type="journal article" date="2017" name="Cell Res.">
        <title>IPA1 functions as a downstream transcription factor repressed by D53 in strigolactone signaling in rice.</title>
        <authorList>
            <person name="Song X."/>
            <person name="Lu Z."/>
            <person name="Yu H."/>
            <person name="Shao G."/>
            <person name="Xiong J."/>
            <person name="Meng X."/>
            <person name="Jing Y."/>
            <person name="Liu G."/>
            <person name="Xiong G."/>
            <person name="Duan J."/>
            <person name="Yao X.F."/>
            <person name="Liu C.M."/>
            <person name="Li H."/>
            <person name="Wang Y."/>
            <person name="Li J."/>
        </authorList>
    </citation>
    <scope>FUNCTION</scope>
    <scope>INTERACTION WITH SPL14</scope>
</reference>
<reference key="11">
    <citation type="journal article" date="2017" name="Sci. Adv.">
        <title>A D53 repression motif induces oligomerization of TOPLESS corepressors and promotes assembly of a corepressor-nucleosome complex.</title>
        <authorList>
            <person name="Ma H."/>
            <person name="Duan J."/>
            <person name="Ke J."/>
            <person name="He Y."/>
            <person name="Gu X."/>
            <person name="Xu T.H."/>
            <person name="Yu H."/>
            <person name="Wang Y."/>
            <person name="Brunzelle J.S."/>
            <person name="Jiang Y."/>
            <person name="Rothbart S.B."/>
            <person name="Xu H.E."/>
            <person name="Li J."/>
            <person name="Melcher K."/>
        </authorList>
    </citation>
    <scope>X-RAY CRYSTALLOGRAPHY (2.00 ANGSTROMS) OF 794-808</scope>
</reference>
<organism>
    <name type="scientific">Oryza sativa subsp. japonica</name>
    <name type="common">Rice</name>
    <dbReference type="NCBI Taxonomy" id="39947"/>
    <lineage>
        <taxon>Eukaryota</taxon>
        <taxon>Viridiplantae</taxon>
        <taxon>Streptophyta</taxon>
        <taxon>Embryophyta</taxon>
        <taxon>Tracheophyta</taxon>
        <taxon>Spermatophyta</taxon>
        <taxon>Magnoliopsida</taxon>
        <taxon>Liliopsida</taxon>
        <taxon>Poales</taxon>
        <taxon>Poaceae</taxon>
        <taxon>BOP clade</taxon>
        <taxon>Oryzoideae</taxon>
        <taxon>Oryzeae</taxon>
        <taxon>Oryzinae</taxon>
        <taxon>Oryza</taxon>
        <taxon>Oryza sativa</taxon>
    </lineage>
</organism>